<name>YCGR_SERP5</name>
<comment type="function">
    <text evidence="1">Acts as a flagellar brake, regulating swimming and swarming in a bis-(3'-5') cyclic diguanylic acid (c-di-GMP)-dependent manner. Binds 1 c-di-GMP dimer per subunit. Increasing levels of c-di-GMP lead to decreased motility.</text>
</comment>
<comment type="subunit">
    <text evidence="1">Monomer. Interacts with the flagellar basal bodies.</text>
</comment>
<comment type="subcellular location">
    <subcellularLocation>
        <location evidence="1">Bacterial flagellum basal body</location>
    </subcellularLocation>
</comment>
<comment type="similarity">
    <text evidence="1">Belongs to the YcgR family.</text>
</comment>
<sequence length="237" mass="27189">MEQNDNGLFIKQERFEVLAILREICKQRTPLKVVNDRQQFQSLLLSVGPDNIVFSGDEADNRVDGECTIVIESHDAKIEFSVGQAEFTDHQGVNACSTRLPKELIYIQRRRQFRVTTPHWREFLCSGEYADGSEYQLRIHDLSAGGVGLRVDGPLPENLQPGFQFKKALLDLGSYGSFKVNMELVVINEDHELDDDDNMVHFSRLSCRFMKLGLAMERKIQSAVFAFELDFNKKKKR</sequence>
<accession>A8GEX8</accession>
<organism>
    <name type="scientific">Serratia proteamaculans (strain 568)</name>
    <dbReference type="NCBI Taxonomy" id="399741"/>
    <lineage>
        <taxon>Bacteria</taxon>
        <taxon>Pseudomonadati</taxon>
        <taxon>Pseudomonadota</taxon>
        <taxon>Gammaproteobacteria</taxon>
        <taxon>Enterobacterales</taxon>
        <taxon>Yersiniaceae</taxon>
        <taxon>Serratia</taxon>
    </lineage>
</organism>
<gene>
    <name evidence="1" type="primary">ycgR</name>
    <name type="ordered locus">Spro_2567</name>
</gene>
<proteinExistence type="inferred from homology"/>
<keyword id="KW-0975">Bacterial flagellum</keyword>
<keyword id="KW-0973">c-di-GMP</keyword>
<keyword id="KW-0547">Nucleotide-binding</keyword>
<protein>
    <recommendedName>
        <fullName evidence="1">Flagellar brake protein YcgR</fullName>
    </recommendedName>
    <alternativeName>
        <fullName evidence="1">Cyclic di-GMP binding protein YcgR</fullName>
    </alternativeName>
</protein>
<evidence type="ECO:0000255" key="1">
    <source>
        <dbReference type="HAMAP-Rule" id="MF_01457"/>
    </source>
</evidence>
<feature type="chain" id="PRO_0000395284" description="Flagellar brake protein YcgR">
    <location>
        <begin position="1"/>
        <end position="237"/>
    </location>
</feature>
<feature type="domain" description="PilZ" evidence="1">
    <location>
        <begin position="108"/>
        <end position="225"/>
    </location>
</feature>
<dbReference type="EMBL" id="CP000826">
    <property type="protein sequence ID" value="ABV41668.1"/>
    <property type="molecule type" value="Genomic_DNA"/>
</dbReference>
<dbReference type="SMR" id="A8GEX8"/>
<dbReference type="STRING" id="399741.Spro_2567"/>
<dbReference type="KEGG" id="spe:Spro_2567"/>
<dbReference type="eggNOG" id="COG5581">
    <property type="taxonomic scope" value="Bacteria"/>
</dbReference>
<dbReference type="HOGENOM" id="CLU_086025_1_0_6"/>
<dbReference type="OrthoDB" id="5572581at2"/>
<dbReference type="GO" id="GO:0009425">
    <property type="term" value="C:bacterial-type flagellum basal body"/>
    <property type="evidence" value="ECO:0007669"/>
    <property type="project" value="UniProtKB-SubCell"/>
</dbReference>
<dbReference type="GO" id="GO:0035438">
    <property type="term" value="F:cyclic-di-GMP binding"/>
    <property type="evidence" value="ECO:0007669"/>
    <property type="project" value="UniProtKB-UniRule"/>
</dbReference>
<dbReference type="GO" id="GO:0071973">
    <property type="term" value="P:bacterial-type flagellum-dependent cell motility"/>
    <property type="evidence" value="ECO:0007669"/>
    <property type="project" value="UniProtKB-UniRule"/>
</dbReference>
<dbReference type="GO" id="GO:0071945">
    <property type="term" value="P:regulation of bacterial-type flagellum-dependent cell motility by regulation of motor speed"/>
    <property type="evidence" value="ECO:0007669"/>
    <property type="project" value="UniProtKB-UniRule"/>
</dbReference>
<dbReference type="Gene3D" id="2.30.110.10">
    <property type="entry name" value="Electron Transport, Fmn-binding Protein, Chain A"/>
    <property type="match status" value="1"/>
</dbReference>
<dbReference type="Gene3D" id="2.40.10.220">
    <property type="entry name" value="predicted glycosyltransferase like domains"/>
    <property type="match status" value="1"/>
</dbReference>
<dbReference type="HAMAP" id="MF_01457">
    <property type="entry name" value="YcgR"/>
    <property type="match status" value="1"/>
</dbReference>
<dbReference type="InterPro" id="IPR009875">
    <property type="entry name" value="PilZ_domain"/>
</dbReference>
<dbReference type="InterPro" id="IPR012349">
    <property type="entry name" value="Split_barrel_FMN-bd"/>
</dbReference>
<dbReference type="InterPro" id="IPR023787">
    <property type="entry name" value="T3SS_YcgR"/>
</dbReference>
<dbReference type="InterPro" id="IPR009926">
    <property type="entry name" value="T3SS_YcgR_PilZN"/>
</dbReference>
<dbReference type="Pfam" id="PF07238">
    <property type="entry name" value="PilZ"/>
    <property type="match status" value="1"/>
</dbReference>
<dbReference type="Pfam" id="PF07317">
    <property type="entry name" value="PilZN"/>
    <property type="match status" value="1"/>
</dbReference>
<reference key="1">
    <citation type="submission" date="2007-09" db="EMBL/GenBank/DDBJ databases">
        <title>Complete sequence of chromosome of Serratia proteamaculans 568.</title>
        <authorList>
            <consortium name="US DOE Joint Genome Institute"/>
            <person name="Copeland A."/>
            <person name="Lucas S."/>
            <person name="Lapidus A."/>
            <person name="Barry K."/>
            <person name="Glavina del Rio T."/>
            <person name="Dalin E."/>
            <person name="Tice H."/>
            <person name="Pitluck S."/>
            <person name="Chain P."/>
            <person name="Malfatti S."/>
            <person name="Shin M."/>
            <person name="Vergez L."/>
            <person name="Schmutz J."/>
            <person name="Larimer F."/>
            <person name="Land M."/>
            <person name="Hauser L."/>
            <person name="Kyrpides N."/>
            <person name="Kim E."/>
            <person name="Taghavi S."/>
            <person name="Newman L."/>
            <person name="Vangronsveld J."/>
            <person name="van der Lelie D."/>
            <person name="Richardson P."/>
        </authorList>
    </citation>
    <scope>NUCLEOTIDE SEQUENCE [LARGE SCALE GENOMIC DNA]</scope>
    <source>
        <strain>568</strain>
    </source>
</reference>